<organism>
    <name type="scientific">Homo sapiens</name>
    <name type="common">Human</name>
    <dbReference type="NCBI Taxonomy" id="9606"/>
    <lineage>
        <taxon>Eukaryota</taxon>
        <taxon>Metazoa</taxon>
        <taxon>Chordata</taxon>
        <taxon>Craniata</taxon>
        <taxon>Vertebrata</taxon>
        <taxon>Euteleostomi</taxon>
        <taxon>Mammalia</taxon>
        <taxon>Eutheria</taxon>
        <taxon>Euarchontoglires</taxon>
        <taxon>Primates</taxon>
        <taxon>Haplorrhini</taxon>
        <taxon>Catarrhini</taxon>
        <taxon>Hominidae</taxon>
        <taxon>Homo</taxon>
    </lineage>
</organism>
<evidence type="ECO:0000250" key="1"/>
<evidence type="ECO:0000250" key="2">
    <source>
        <dbReference type="UniProtKB" id="Q62179"/>
    </source>
</evidence>
<evidence type="ECO:0000255" key="3"/>
<evidence type="ECO:0000255" key="4">
    <source>
        <dbReference type="PROSITE-ProRule" id="PRU00352"/>
    </source>
</evidence>
<evidence type="ECO:0000256" key="5">
    <source>
        <dbReference type="SAM" id="MobiDB-lite"/>
    </source>
</evidence>
<evidence type="ECO:0000269" key="6">
    <source>
    </source>
</evidence>
<evidence type="ECO:0000269" key="7">
    <source>
    </source>
</evidence>
<evidence type="ECO:0000269" key="8">
    <source>
    </source>
</evidence>
<evidence type="ECO:0000269" key="9">
    <source>
    </source>
</evidence>
<evidence type="ECO:0000269" key="10">
    <source ref="1"/>
</evidence>
<evidence type="ECO:0000269" key="11">
    <source ref="6"/>
</evidence>
<evidence type="ECO:0000303" key="12">
    <source>
    </source>
</evidence>
<evidence type="ECO:0000303" key="13">
    <source>
    </source>
</evidence>
<evidence type="ECO:0000305" key="14"/>
<evidence type="ECO:0000305" key="15">
    <source ref="1"/>
</evidence>
<evidence type="ECO:0000312" key="16">
    <source>
        <dbReference type="HGNC" id="HGNC:10730"/>
    </source>
</evidence>
<evidence type="ECO:0007744" key="17">
    <source>
    </source>
</evidence>
<evidence type="ECO:0007744" key="18">
    <source>
    </source>
</evidence>
<evidence type="ECO:0007744" key="19">
    <source>
    </source>
</evidence>
<name>SEM4B_HUMAN</name>
<proteinExistence type="evidence at protein level"/>
<accession>Q9NPR2</accession>
<accession>J3KNP4</accession>
<accession>Q6UXE3</accession>
<accession>Q8WVP9</accession>
<accession>Q96FK5</accession>
<accession>Q9C0B8</accession>
<accession>Q9H691</accession>
<accession>Q9NPM8</accession>
<accession>Q9NPN0</accession>
<sequence length="837" mass="92766">MLRTAMGLRSWLAAPWGALPPRPPLLLLLLLLLLLQPPPPTWALSPRISLPLGSEERPFLRFEAEHISNYTALLLSRDGRTLYVGAREALFALSSNLSFLPGGEYQELLWGADAEKKQQCSFKGKDPQRDCQNYIKILLPLSGSHLFTCGTAAFSPMCTYINMENFTLARDEKGNVLLEDGKGRCPFDPNFKSTALVVDGELYTGTVSSFQGNDPAISRSQSLRPTKTESSLNWLQDPAFVASAYIPESLGSLQGDDDKIYFFFSETGQEFEFFENTIVSRIARICKGDEGGERVLQQRWTSFLKAQLLCSRPDDGFPFNVLQDVFTLSPSPQDWRDTLFYGVFTSQWHRGTTEGSAVCVFTMKDVQRVFSGLYKEVNRETQQWYTVTHPVPTPRPGACITNSARERKINSSLQLPDRVLNFLKDHFLMDGQVRSRMLLLQPQARYQRVAVHRVPGLHHTYDVLFLGTGDGRLHKAVSVGPRVHIIEELQIFSSGQPVQNLLLDTHRGLLYAASHSGVVQVPMANCSLYRSCGDCLLARDPYCAWSGSSCKHVSLYQPQLATRPWIQDIEGASAKDLCSASSVVSPSFVPTGEKPCEQVQFQPNTVNTLACPLLSNLATRLWLRNGAPVNASASCHVLPTGDLLLVGTQQLGEFQCWSLEEGFQQLVASYCPEVVEDGVADQTDEGGSVPVIISTSRVSAPAGGKASWGADRSYWKEFLVMCTLFVLAVLLPVLFLLYRHRNSMKVFLKQGECASVHPKTCPVVLPPETRPLNGLGPPSTPLDHRGYQSLSDSPPGSRVFTESEKRPLSIQDSFVEVSPVCPRPRVRLGSEIRDSVV</sequence>
<dbReference type="EMBL" id="AY445887">
    <property type="protein sequence ID" value="AAR15707.1"/>
    <property type="molecule type" value="mRNA"/>
</dbReference>
<dbReference type="EMBL" id="AB051532">
    <property type="protein sequence ID" value="BAB21836.1"/>
    <property type="status" value="ALT_INIT"/>
    <property type="molecule type" value="mRNA"/>
</dbReference>
<dbReference type="EMBL" id="AY358392">
    <property type="protein sequence ID" value="AAQ88758.1"/>
    <property type="molecule type" value="mRNA"/>
</dbReference>
<dbReference type="EMBL" id="AC091167">
    <property type="status" value="NOT_ANNOTATED_CDS"/>
    <property type="molecule type" value="Genomic_DNA"/>
</dbReference>
<dbReference type="EMBL" id="AL390080">
    <property type="protein sequence ID" value="CAB98204.1"/>
    <property type="molecule type" value="mRNA"/>
</dbReference>
<dbReference type="EMBL" id="AL390081">
    <property type="protein sequence ID" value="CAB98205.1"/>
    <property type="molecule type" value="mRNA"/>
</dbReference>
<dbReference type="EMBL" id="AL390082">
    <property type="protein sequence ID" value="CAB98206.1"/>
    <property type="molecule type" value="mRNA"/>
</dbReference>
<dbReference type="EMBL" id="AK026133">
    <property type="protein sequence ID" value="BAB15372.1"/>
    <property type="status" value="ALT_INIT"/>
    <property type="molecule type" value="mRNA"/>
</dbReference>
<dbReference type="EMBL" id="BC010701">
    <property type="protein sequence ID" value="AAH10701.2"/>
    <property type="molecule type" value="mRNA"/>
</dbReference>
<dbReference type="EMBL" id="BC017658">
    <property type="protein sequence ID" value="AAH17658.1"/>
    <property type="molecule type" value="mRNA"/>
</dbReference>
<dbReference type="CCDS" id="CCDS45347.1">
    <molecule id="Q9NPR2-1"/>
</dbReference>
<dbReference type="RefSeq" id="NP_001310960.2">
    <molecule id="Q9NPR2-1"/>
    <property type="nucleotide sequence ID" value="NM_001324031.4"/>
</dbReference>
<dbReference type="RefSeq" id="NP_064595.2">
    <molecule id="Q9NPR2-1"/>
    <property type="nucleotide sequence ID" value="NM_020210.3"/>
</dbReference>
<dbReference type="RefSeq" id="NP_945119.1">
    <molecule id="Q9NPR2-1"/>
    <property type="nucleotide sequence ID" value="NM_198925.4"/>
</dbReference>
<dbReference type="SMR" id="Q9NPR2"/>
<dbReference type="FunCoup" id="Q9NPR2">
    <property type="interactions" value="343"/>
</dbReference>
<dbReference type="IntAct" id="Q9NPR2">
    <property type="interactions" value="32"/>
</dbReference>
<dbReference type="MINT" id="Q9NPR2"/>
<dbReference type="STRING" id="9606.ENSP00000394720"/>
<dbReference type="GlyConnect" id="1975">
    <property type="glycosylation" value="8 N-Linked glycans (2 sites)"/>
</dbReference>
<dbReference type="GlyCosmos" id="Q9NPR2">
    <property type="glycosylation" value="7 sites, 9 glycans"/>
</dbReference>
<dbReference type="GlyGen" id="Q9NPR2">
    <property type="glycosylation" value="8 sites, 8 N-linked glycans (2 sites), 1 O-linked glycan (1 site)"/>
</dbReference>
<dbReference type="iPTMnet" id="Q9NPR2"/>
<dbReference type="PhosphoSitePlus" id="Q9NPR2"/>
<dbReference type="SwissPalm" id="Q9NPR2"/>
<dbReference type="BioMuta" id="SEMA4B"/>
<dbReference type="DMDM" id="29840873"/>
<dbReference type="jPOST" id="Q9NPR2"/>
<dbReference type="MassIVE" id="Q9NPR2"/>
<dbReference type="PaxDb" id="9606-ENSP00000394720"/>
<dbReference type="PeptideAtlas" id="Q9NPR2"/>
<dbReference type="ProteomicsDB" id="82044">
    <molecule id="Q9NPR2-1"/>
</dbReference>
<dbReference type="ProteomicsDB" id="82045">
    <molecule id="Q9NPR2-2"/>
</dbReference>
<dbReference type="Pumba" id="Q9NPR2"/>
<dbReference type="Antibodypedia" id="2694">
    <property type="antibodies" value="267 antibodies from 25 providers"/>
</dbReference>
<dbReference type="DNASU" id="10509"/>
<dbReference type="Ensembl" id="ENST00000332496.10">
    <molecule id="Q9NPR2-1"/>
    <property type="protein sequence ID" value="ENSP00000332204.6"/>
    <property type="gene ID" value="ENSG00000185033.15"/>
</dbReference>
<dbReference type="Ensembl" id="ENST00000411539.7">
    <molecule id="Q9NPR2-1"/>
    <property type="protein sequence ID" value="ENSP00000394720.2"/>
    <property type="gene ID" value="ENSG00000185033.15"/>
</dbReference>
<dbReference type="GeneID" id="10509"/>
<dbReference type="KEGG" id="hsa:10509"/>
<dbReference type="MANE-Select" id="ENST00000411539.7">
    <property type="protein sequence ID" value="ENSP00000394720.2"/>
    <property type="RefSeq nucleotide sequence ID" value="NM_198925.4"/>
    <property type="RefSeq protein sequence ID" value="NP_945119.1"/>
</dbReference>
<dbReference type="UCSC" id="uc002boy.4">
    <property type="organism name" value="human"/>
</dbReference>
<dbReference type="AGR" id="HGNC:10730"/>
<dbReference type="CTD" id="10509"/>
<dbReference type="DisGeNET" id="10509"/>
<dbReference type="GeneCards" id="SEMA4B"/>
<dbReference type="HGNC" id="HGNC:10730">
    <property type="gene designation" value="SEMA4B"/>
</dbReference>
<dbReference type="HPA" id="ENSG00000185033">
    <property type="expression patterns" value="Tissue enhanced (esophagus)"/>
</dbReference>
<dbReference type="neXtProt" id="NX_Q9NPR2"/>
<dbReference type="OpenTargets" id="ENSG00000185033"/>
<dbReference type="VEuPathDB" id="HostDB:ENSG00000185033"/>
<dbReference type="eggNOG" id="KOG3611">
    <property type="taxonomic scope" value="Eukaryota"/>
</dbReference>
<dbReference type="GeneTree" id="ENSGT00940000154870"/>
<dbReference type="HOGENOM" id="CLU_009051_4_3_1"/>
<dbReference type="InParanoid" id="Q9NPR2"/>
<dbReference type="OMA" id="YINVQHF"/>
<dbReference type="OrthoDB" id="9988752at2759"/>
<dbReference type="PAN-GO" id="Q9NPR2">
    <property type="GO annotations" value="10 GO annotations based on evolutionary models"/>
</dbReference>
<dbReference type="PhylomeDB" id="Q9NPR2"/>
<dbReference type="TreeFam" id="TF352903"/>
<dbReference type="PathwayCommons" id="Q9NPR2"/>
<dbReference type="SignaLink" id="Q9NPR2"/>
<dbReference type="BioGRID-ORCS" id="10509">
    <property type="hits" value="21 hits in 1161 CRISPR screens"/>
</dbReference>
<dbReference type="ChiTaRS" id="SEMA4B">
    <property type="organism name" value="human"/>
</dbReference>
<dbReference type="GenomeRNAi" id="10509"/>
<dbReference type="Pharos" id="Q9NPR2">
    <property type="development level" value="Tbio"/>
</dbReference>
<dbReference type="PRO" id="PR:Q9NPR2"/>
<dbReference type="Proteomes" id="UP000005640">
    <property type="component" value="Chromosome 15"/>
</dbReference>
<dbReference type="RNAct" id="Q9NPR2">
    <property type="molecule type" value="protein"/>
</dbReference>
<dbReference type="Bgee" id="ENSG00000185033">
    <property type="expression patterns" value="Expressed in ileal mucosa and 145 other cell types or tissues"/>
</dbReference>
<dbReference type="ExpressionAtlas" id="Q9NPR2">
    <property type="expression patterns" value="baseline and differential"/>
</dbReference>
<dbReference type="GO" id="GO:0098978">
    <property type="term" value="C:glutamatergic synapse"/>
    <property type="evidence" value="ECO:0007669"/>
    <property type="project" value="Ensembl"/>
</dbReference>
<dbReference type="GO" id="GO:0005886">
    <property type="term" value="C:plasma membrane"/>
    <property type="evidence" value="ECO:0000318"/>
    <property type="project" value="GO_Central"/>
</dbReference>
<dbReference type="GO" id="GO:0098839">
    <property type="term" value="C:postsynaptic density membrane"/>
    <property type="evidence" value="ECO:0007669"/>
    <property type="project" value="Ensembl"/>
</dbReference>
<dbReference type="GO" id="GO:0045499">
    <property type="term" value="F:chemorepellent activity"/>
    <property type="evidence" value="ECO:0000318"/>
    <property type="project" value="GO_Central"/>
</dbReference>
<dbReference type="GO" id="GO:0038191">
    <property type="term" value="F:neuropilin binding"/>
    <property type="evidence" value="ECO:0000318"/>
    <property type="project" value="GO_Central"/>
</dbReference>
<dbReference type="GO" id="GO:0030215">
    <property type="term" value="F:semaphorin receptor binding"/>
    <property type="evidence" value="ECO:0000318"/>
    <property type="project" value="GO_Central"/>
</dbReference>
<dbReference type="GO" id="GO:0007411">
    <property type="term" value="P:axon guidance"/>
    <property type="evidence" value="ECO:0000318"/>
    <property type="project" value="GO_Central"/>
</dbReference>
<dbReference type="GO" id="GO:0050919">
    <property type="term" value="P:negative chemotaxis"/>
    <property type="evidence" value="ECO:0000318"/>
    <property type="project" value="GO_Central"/>
</dbReference>
<dbReference type="GO" id="GO:0001755">
    <property type="term" value="P:neural crest cell migration"/>
    <property type="evidence" value="ECO:0000318"/>
    <property type="project" value="GO_Central"/>
</dbReference>
<dbReference type="GO" id="GO:0030335">
    <property type="term" value="P:positive regulation of cell migration"/>
    <property type="evidence" value="ECO:0000318"/>
    <property type="project" value="GO_Central"/>
</dbReference>
<dbReference type="GO" id="GO:0071526">
    <property type="term" value="P:semaphorin-plexin signaling pathway"/>
    <property type="evidence" value="ECO:0000318"/>
    <property type="project" value="GO_Central"/>
</dbReference>
<dbReference type="CDD" id="cd05872">
    <property type="entry name" value="Ig_Sema4B_like"/>
    <property type="match status" value="1"/>
</dbReference>
<dbReference type="CDD" id="cd11257">
    <property type="entry name" value="Sema_4B"/>
    <property type="match status" value="1"/>
</dbReference>
<dbReference type="FunFam" id="2.130.10.10:FF:000033">
    <property type="entry name" value="Semaphorin 4B"/>
    <property type="match status" value="1"/>
</dbReference>
<dbReference type="FunFam" id="3.30.1680.10:FF:000022">
    <property type="entry name" value="Semaphorin 4B"/>
    <property type="match status" value="1"/>
</dbReference>
<dbReference type="Gene3D" id="3.30.1680.10">
    <property type="entry name" value="ligand-binding face of the semaphorins, domain 2"/>
    <property type="match status" value="1"/>
</dbReference>
<dbReference type="Gene3D" id="2.130.10.10">
    <property type="entry name" value="YVTN repeat-like/Quinoprotein amine dehydrogenase"/>
    <property type="match status" value="1"/>
</dbReference>
<dbReference type="InterPro" id="IPR002165">
    <property type="entry name" value="Plexin_repeat"/>
</dbReference>
<dbReference type="InterPro" id="IPR016201">
    <property type="entry name" value="PSI"/>
</dbReference>
<dbReference type="InterPro" id="IPR001627">
    <property type="entry name" value="Semap_dom"/>
</dbReference>
<dbReference type="InterPro" id="IPR036352">
    <property type="entry name" value="Semap_dom_sf"/>
</dbReference>
<dbReference type="InterPro" id="IPR027231">
    <property type="entry name" value="Semaphorin"/>
</dbReference>
<dbReference type="InterPro" id="IPR015943">
    <property type="entry name" value="WD40/YVTN_repeat-like_dom_sf"/>
</dbReference>
<dbReference type="PANTHER" id="PTHR11036">
    <property type="entry name" value="SEMAPHORIN"/>
    <property type="match status" value="1"/>
</dbReference>
<dbReference type="PANTHER" id="PTHR11036:SF14">
    <property type="entry name" value="SEMAPHORIN-4B"/>
    <property type="match status" value="1"/>
</dbReference>
<dbReference type="Pfam" id="PF01437">
    <property type="entry name" value="PSI"/>
    <property type="match status" value="1"/>
</dbReference>
<dbReference type="Pfam" id="PF01403">
    <property type="entry name" value="Sema"/>
    <property type="match status" value="1"/>
</dbReference>
<dbReference type="SMART" id="SM00423">
    <property type="entry name" value="PSI"/>
    <property type="match status" value="1"/>
</dbReference>
<dbReference type="SMART" id="SM00630">
    <property type="entry name" value="Sema"/>
    <property type="match status" value="1"/>
</dbReference>
<dbReference type="SUPFAM" id="SSF103575">
    <property type="entry name" value="Plexin repeat"/>
    <property type="match status" value="1"/>
</dbReference>
<dbReference type="SUPFAM" id="SSF101912">
    <property type="entry name" value="Sema domain"/>
    <property type="match status" value="1"/>
</dbReference>
<dbReference type="PROSITE" id="PS51004">
    <property type="entry name" value="SEMA"/>
    <property type="match status" value="1"/>
</dbReference>
<gene>
    <name evidence="16" type="primary">SEMA4B</name>
    <name evidence="12" type="synonym">KIAA1745</name>
    <name evidence="16" type="synonym">SEMAC</name>
    <name type="ORF">UNQ749/PRO1480</name>
</gene>
<reference key="1">
    <citation type="submission" date="2003-10" db="EMBL/GenBank/DDBJ databases">
        <title>Semaphorin 4b is a novel hypoxia-induced gene over-expressed in human tumors.</title>
        <authorList>
            <person name="White J.R."/>
            <person name="Levinson N."/>
            <person name="Lee S.R."/>
            <person name="Myers K.A."/>
            <person name="Harris R.A."/>
            <person name="Balkwill F."/>
            <person name="Beard G.L."/>
            <person name="Naylor S."/>
        </authorList>
    </citation>
    <scope>NUCLEOTIDE SEQUENCE [MRNA] (ISOFORM 1)</scope>
    <scope>VARIANT ALA-797</scope>
</reference>
<reference key="2">
    <citation type="journal article" date="2000" name="DNA Res.">
        <title>Prediction of the coding sequences of unidentified human genes. XIX. The complete sequences of 100 new cDNA clones from brain which code for large proteins in vitro.</title>
        <authorList>
            <person name="Nagase T."/>
            <person name="Kikuno R."/>
            <person name="Hattori A."/>
            <person name="Kondo Y."/>
            <person name="Okumura K."/>
            <person name="Ohara O."/>
        </authorList>
    </citation>
    <scope>NUCLEOTIDE SEQUENCE [LARGE SCALE MRNA] (ISOFORM 1)</scope>
    <source>
        <tissue>Brain</tissue>
    </source>
</reference>
<reference key="3">
    <citation type="journal article" date="2003" name="Genome Res.">
        <title>The secreted protein discovery initiative (SPDI), a large-scale effort to identify novel human secreted and transmembrane proteins: a bioinformatics assessment.</title>
        <authorList>
            <person name="Clark H.F."/>
            <person name="Gurney A.L."/>
            <person name="Abaya E."/>
            <person name="Baker K."/>
            <person name="Baldwin D.T."/>
            <person name="Brush J."/>
            <person name="Chen J."/>
            <person name="Chow B."/>
            <person name="Chui C."/>
            <person name="Crowley C."/>
            <person name="Currell B."/>
            <person name="Deuel B."/>
            <person name="Dowd P."/>
            <person name="Eaton D."/>
            <person name="Foster J.S."/>
            <person name="Grimaldi C."/>
            <person name="Gu Q."/>
            <person name="Hass P.E."/>
            <person name="Heldens S."/>
            <person name="Huang A."/>
            <person name="Kim H.S."/>
            <person name="Klimowski L."/>
            <person name="Jin Y."/>
            <person name="Johnson S."/>
            <person name="Lee J."/>
            <person name="Lewis L."/>
            <person name="Liao D."/>
            <person name="Mark M.R."/>
            <person name="Robbie E."/>
            <person name="Sanchez C."/>
            <person name="Schoenfeld J."/>
            <person name="Seshagiri S."/>
            <person name="Simmons L."/>
            <person name="Singh J."/>
            <person name="Smith V."/>
            <person name="Stinson J."/>
            <person name="Vagts A."/>
            <person name="Vandlen R.L."/>
            <person name="Watanabe C."/>
            <person name="Wieand D."/>
            <person name="Woods K."/>
            <person name="Xie M.-H."/>
            <person name="Yansura D.G."/>
            <person name="Yi S."/>
            <person name="Yu G."/>
            <person name="Yuan J."/>
            <person name="Zhang M."/>
            <person name="Zhang Z."/>
            <person name="Goddard A.D."/>
            <person name="Wood W.I."/>
            <person name="Godowski P.J."/>
            <person name="Gray A.M."/>
        </authorList>
    </citation>
    <scope>NUCLEOTIDE SEQUENCE [LARGE SCALE MRNA] (ISOFORM 1)</scope>
    <scope>VARIANT ALA-797</scope>
</reference>
<reference key="4">
    <citation type="journal article" date="2006" name="Nature">
        <title>Analysis of the DNA sequence and duplication history of human chromosome 15.</title>
        <authorList>
            <person name="Zody M.C."/>
            <person name="Garber M."/>
            <person name="Sharpe T."/>
            <person name="Young S.K."/>
            <person name="Rowen L."/>
            <person name="O'Neill K."/>
            <person name="Whittaker C.A."/>
            <person name="Kamal M."/>
            <person name="Chang J.L."/>
            <person name="Cuomo C.A."/>
            <person name="Dewar K."/>
            <person name="FitzGerald M.G."/>
            <person name="Kodira C.D."/>
            <person name="Madan A."/>
            <person name="Qin S."/>
            <person name="Yang X."/>
            <person name="Abbasi N."/>
            <person name="Abouelleil A."/>
            <person name="Arachchi H.M."/>
            <person name="Baradarani L."/>
            <person name="Birditt B."/>
            <person name="Bloom S."/>
            <person name="Bloom T."/>
            <person name="Borowsky M.L."/>
            <person name="Burke J."/>
            <person name="Butler J."/>
            <person name="Cook A."/>
            <person name="DeArellano K."/>
            <person name="DeCaprio D."/>
            <person name="Dorris L. III"/>
            <person name="Dors M."/>
            <person name="Eichler E.E."/>
            <person name="Engels R."/>
            <person name="Fahey J."/>
            <person name="Fleetwood P."/>
            <person name="Friedman C."/>
            <person name="Gearin G."/>
            <person name="Hall J.L."/>
            <person name="Hensley G."/>
            <person name="Johnson E."/>
            <person name="Jones C."/>
            <person name="Kamat A."/>
            <person name="Kaur A."/>
            <person name="Locke D.P."/>
            <person name="Madan A."/>
            <person name="Munson G."/>
            <person name="Jaffe D.B."/>
            <person name="Lui A."/>
            <person name="Macdonald P."/>
            <person name="Mauceli E."/>
            <person name="Naylor J.W."/>
            <person name="Nesbitt R."/>
            <person name="Nicol R."/>
            <person name="O'Leary S.B."/>
            <person name="Ratcliffe A."/>
            <person name="Rounsley S."/>
            <person name="She X."/>
            <person name="Sneddon K.M.B."/>
            <person name="Stewart S."/>
            <person name="Sougnez C."/>
            <person name="Stone S.M."/>
            <person name="Topham K."/>
            <person name="Vincent D."/>
            <person name="Wang S."/>
            <person name="Zimmer A.R."/>
            <person name="Birren B.W."/>
            <person name="Hood L."/>
            <person name="Lander E.S."/>
            <person name="Nusbaum C."/>
        </authorList>
    </citation>
    <scope>NUCLEOTIDE SEQUENCE [LARGE SCALE GENOMIC DNA]</scope>
</reference>
<reference key="5">
    <citation type="journal article" date="2004" name="Protein Sci.">
        <title>Signal peptide prediction based on analysis of experimentally verified cleavage sites.</title>
        <authorList>
            <person name="Zhang Z."/>
            <person name="Henzel W.J."/>
        </authorList>
    </citation>
    <scope>PROTEIN SEQUENCE OF 44-58</scope>
</reference>
<reference key="6">
    <citation type="submission" date="2000-07" db="EMBL/GenBank/DDBJ databases">
        <authorList>
            <consortium name="The European IMAGE consortium"/>
        </authorList>
    </citation>
    <scope>NUCLEOTIDE SEQUENCE [LARGE SCALE MRNA] OF 165-837 (ISOFORM 1)</scope>
    <scope>VARIANT ALA-797</scope>
</reference>
<reference key="7">
    <citation type="journal article" date="2004" name="Nat. Genet.">
        <title>Complete sequencing and characterization of 21,243 full-length human cDNAs.</title>
        <authorList>
            <person name="Ota T."/>
            <person name="Suzuki Y."/>
            <person name="Nishikawa T."/>
            <person name="Otsuki T."/>
            <person name="Sugiyama T."/>
            <person name="Irie R."/>
            <person name="Wakamatsu A."/>
            <person name="Hayashi K."/>
            <person name="Sato H."/>
            <person name="Nagai K."/>
            <person name="Kimura K."/>
            <person name="Makita H."/>
            <person name="Sekine M."/>
            <person name="Obayashi M."/>
            <person name="Nishi T."/>
            <person name="Shibahara T."/>
            <person name="Tanaka T."/>
            <person name="Ishii S."/>
            <person name="Yamamoto J."/>
            <person name="Saito K."/>
            <person name="Kawai Y."/>
            <person name="Isono Y."/>
            <person name="Nakamura Y."/>
            <person name="Nagahari K."/>
            <person name="Murakami K."/>
            <person name="Yasuda T."/>
            <person name="Iwayanagi T."/>
            <person name="Wagatsuma M."/>
            <person name="Shiratori A."/>
            <person name="Sudo H."/>
            <person name="Hosoiri T."/>
            <person name="Kaku Y."/>
            <person name="Kodaira H."/>
            <person name="Kondo H."/>
            <person name="Sugawara M."/>
            <person name="Takahashi M."/>
            <person name="Kanda K."/>
            <person name="Yokoi T."/>
            <person name="Furuya T."/>
            <person name="Kikkawa E."/>
            <person name="Omura Y."/>
            <person name="Abe K."/>
            <person name="Kamihara K."/>
            <person name="Katsuta N."/>
            <person name="Sato K."/>
            <person name="Tanikawa M."/>
            <person name="Yamazaki M."/>
            <person name="Ninomiya K."/>
            <person name="Ishibashi T."/>
            <person name="Yamashita H."/>
            <person name="Murakawa K."/>
            <person name="Fujimori K."/>
            <person name="Tanai H."/>
            <person name="Kimata M."/>
            <person name="Watanabe M."/>
            <person name="Hiraoka S."/>
            <person name="Chiba Y."/>
            <person name="Ishida S."/>
            <person name="Ono Y."/>
            <person name="Takiguchi S."/>
            <person name="Watanabe S."/>
            <person name="Yosida M."/>
            <person name="Hotuta T."/>
            <person name="Kusano J."/>
            <person name="Kanehori K."/>
            <person name="Takahashi-Fujii A."/>
            <person name="Hara H."/>
            <person name="Tanase T.-O."/>
            <person name="Nomura Y."/>
            <person name="Togiya S."/>
            <person name="Komai F."/>
            <person name="Hara R."/>
            <person name="Takeuchi K."/>
            <person name="Arita M."/>
            <person name="Imose N."/>
            <person name="Musashino K."/>
            <person name="Yuuki H."/>
            <person name="Oshima A."/>
            <person name="Sasaki N."/>
            <person name="Aotsuka S."/>
            <person name="Yoshikawa Y."/>
            <person name="Matsunawa H."/>
            <person name="Ichihara T."/>
            <person name="Shiohata N."/>
            <person name="Sano S."/>
            <person name="Moriya S."/>
            <person name="Momiyama H."/>
            <person name="Satoh N."/>
            <person name="Takami S."/>
            <person name="Terashima Y."/>
            <person name="Suzuki O."/>
            <person name="Nakagawa S."/>
            <person name="Senoh A."/>
            <person name="Mizoguchi H."/>
            <person name="Goto Y."/>
            <person name="Shimizu F."/>
            <person name="Wakebe H."/>
            <person name="Hishigaki H."/>
            <person name="Watanabe T."/>
            <person name="Sugiyama A."/>
            <person name="Takemoto M."/>
            <person name="Kawakami B."/>
            <person name="Yamazaki M."/>
            <person name="Watanabe K."/>
            <person name="Kumagai A."/>
            <person name="Itakura S."/>
            <person name="Fukuzumi Y."/>
            <person name="Fujimori Y."/>
            <person name="Komiyama M."/>
            <person name="Tashiro H."/>
            <person name="Tanigami A."/>
            <person name="Fujiwara T."/>
            <person name="Ono T."/>
            <person name="Yamada K."/>
            <person name="Fujii Y."/>
            <person name="Ozaki K."/>
            <person name="Hirao M."/>
            <person name="Ohmori Y."/>
            <person name="Kawabata A."/>
            <person name="Hikiji T."/>
            <person name="Kobatake N."/>
            <person name="Inagaki H."/>
            <person name="Ikema Y."/>
            <person name="Okamoto S."/>
            <person name="Okitani R."/>
            <person name="Kawakami T."/>
            <person name="Noguchi S."/>
            <person name="Itoh T."/>
            <person name="Shigeta K."/>
            <person name="Senba T."/>
            <person name="Matsumura K."/>
            <person name="Nakajima Y."/>
            <person name="Mizuno T."/>
            <person name="Morinaga M."/>
            <person name="Sasaki M."/>
            <person name="Togashi T."/>
            <person name="Oyama M."/>
            <person name="Hata H."/>
            <person name="Watanabe M."/>
            <person name="Komatsu T."/>
            <person name="Mizushima-Sugano J."/>
            <person name="Satoh T."/>
            <person name="Shirai Y."/>
            <person name="Takahashi Y."/>
            <person name="Nakagawa K."/>
            <person name="Okumura K."/>
            <person name="Nagase T."/>
            <person name="Nomura N."/>
            <person name="Kikuchi H."/>
            <person name="Masuho Y."/>
            <person name="Yamashita R."/>
            <person name="Nakai K."/>
            <person name="Yada T."/>
            <person name="Nakamura Y."/>
            <person name="Ohara O."/>
            <person name="Isogai T."/>
            <person name="Sugano S."/>
        </authorList>
    </citation>
    <scope>NUCLEOTIDE SEQUENCE [LARGE SCALE MRNA] OF 284-837 (ISOFORM 2)</scope>
</reference>
<reference key="8">
    <citation type="journal article" date="2004" name="Genome Res.">
        <title>The status, quality, and expansion of the NIH full-length cDNA project: the Mammalian Gene Collection (MGC).</title>
        <authorList>
            <consortium name="The MGC Project Team"/>
        </authorList>
    </citation>
    <scope>NUCLEOTIDE SEQUENCE [LARGE SCALE MRNA] OF 308-837 (ISOFORM 1)</scope>
    <scope>VARIANT ALA-797</scope>
    <source>
        <tissue>Colon</tissue>
        <tissue>Pancreas</tissue>
    </source>
</reference>
<reference key="9">
    <citation type="journal article" date="2005" name="J. Proteome Res.">
        <title>Human plasma N-glycoproteome analysis by immunoaffinity subtraction, hydrazide chemistry, and mass spectrometry.</title>
        <authorList>
            <person name="Liu T."/>
            <person name="Qian W.-J."/>
            <person name="Gritsenko M.A."/>
            <person name="Camp D.G. II"/>
            <person name="Monroe M.E."/>
            <person name="Moore R.J."/>
            <person name="Smith R.D."/>
        </authorList>
    </citation>
    <scope>GLYCOSYLATION [LARGE SCALE ANALYSIS] AT ASN-69 AND ASN-410</scope>
    <source>
        <tissue>Plasma</tissue>
    </source>
</reference>
<reference key="10">
    <citation type="journal article" date="2006" name="Cell">
        <title>Global, in vivo, and site-specific phosphorylation dynamics in signaling networks.</title>
        <authorList>
            <person name="Olsen J.V."/>
            <person name="Blagoev B."/>
            <person name="Gnad F."/>
            <person name="Macek B."/>
            <person name="Kumar C."/>
            <person name="Mortensen P."/>
            <person name="Mann M."/>
        </authorList>
    </citation>
    <scope>PHOSPHORYLATION [LARGE SCALE ANALYSIS] AT SER-818 AND SER-830</scope>
    <scope>IDENTIFICATION BY MASS SPECTROMETRY [LARGE SCALE ANALYSIS]</scope>
    <source>
        <tissue>Cervix carcinoma</tissue>
    </source>
</reference>
<reference key="11">
    <citation type="journal article" date="2008" name="Proc. Natl. Acad. Sci. U.S.A.">
        <title>A quantitative atlas of mitotic phosphorylation.</title>
        <authorList>
            <person name="Dephoure N."/>
            <person name="Zhou C."/>
            <person name="Villen J."/>
            <person name="Beausoleil S.A."/>
            <person name="Bakalarski C.E."/>
            <person name="Elledge S.J."/>
            <person name="Gygi S.P."/>
        </authorList>
    </citation>
    <scope>PHOSPHORYLATION [LARGE SCALE ANALYSIS] AT SER-830</scope>
    <scope>IDENTIFICATION BY MASS SPECTROMETRY [LARGE SCALE ANALYSIS]</scope>
    <source>
        <tissue>Cervix carcinoma</tissue>
    </source>
</reference>
<reference key="12">
    <citation type="journal article" date="2013" name="J. Proteome Res.">
        <title>Toward a comprehensive characterization of a human cancer cell phosphoproteome.</title>
        <authorList>
            <person name="Zhou H."/>
            <person name="Di Palma S."/>
            <person name="Preisinger C."/>
            <person name="Peng M."/>
            <person name="Polat A.N."/>
            <person name="Heck A.J."/>
            <person name="Mohammed S."/>
        </authorList>
    </citation>
    <scope>PHOSPHORYLATION [LARGE SCALE ANALYSIS] AT SER-793 AND SER-830</scope>
    <scope>IDENTIFICATION BY MASS SPECTROMETRY [LARGE SCALE ANALYSIS]</scope>
    <source>
        <tissue>Cervix carcinoma</tissue>
        <tissue>Erythroleukemia</tissue>
    </source>
</reference>
<protein>
    <recommendedName>
        <fullName evidence="15">Semaphorin-4B</fullName>
    </recommendedName>
    <alternativeName>
        <fullName evidence="2">Semaphorin-C</fullName>
    </alternativeName>
</protein>
<keyword id="KW-0025">Alternative splicing</keyword>
<keyword id="KW-0217">Developmental protein</keyword>
<keyword id="KW-0221">Differentiation</keyword>
<keyword id="KW-0903">Direct protein sequencing</keyword>
<keyword id="KW-1015">Disulfide bond</keyword>
<keyword id="KW-0325">Glycoprotein</keyword>
<keyword id="KW-0393">Immunoglobulin domain</keyword>
<keyword id="KW-0472">Membrane</keyword>
<keyword id="KW-0524">Neurogenesis</keyword>
<keyword id="KW-0597">Phosphoprotein</keyword>
<keyword id="KW-1267">Proteomics identification</keyword>
<keyword id="KW-1185">Reference proteome</keyword>
<keyword id="KW-0732">Signal</keyword>
<keyword id="KW-0812">Transmembrane</keyword>
<keyword id="KW-1133">Transmembrane helix</keyword>
<feature type="signal peptide" evidence="7">
    <location>
        <begin position="1"/>
        <end position="43"/>
    </location>
</feature>
<feature type="chain" id="PRO_0000032324" description="Semaphorin-4B">
    <location>
        <begin position="44"/>
        <end position="837"/>
    </location>
</feature>
<feature type="topological domain" description="Extracellular" evidence="3">
    <location>
        <begin position="44"/>
        <end position="717"/>
    </location>
</feature>
<feature type="transmembrane region" description="Helical" evidence="3">
    <location>
        <begin position="718"/>
        <end position="738"/>
    </location>
</feature>
<feature type="topological domain" description="Cytoplasmic" evidence="3">
    <location>
        <begin position="739"/>
        <end position="837"/>
    </location>
</feature>
<feature type="domain" description="Sema" evidence="4">
    <location>
        <begin position="47"/>
        <end position="523"/>
    </location>
</feature>
<feature type="domain" description="PSI">
    <location>
        <begin position="525"/>
        <end position="579"/>
    </location>
</feature>
<feature type="domain" description="Ig-like C2-type">
    <location>
        <begin position="604"/>
        <end position="663"/>
    </location>
</feature>
<feature type="region of interest" description="Disordered" evidence="5">
    <location>
        <begin position="767"/>
        <end position="805"/>
    </location>
</feature>
<feature type="modified residue" description="Phosphoserine" evidence="19">
    <location>
        <position position="793"/>
    </location>
</feature>
<feature type="modified residue" description="Phosphoserine" evidence="17">
    <location>
        <position position="818"/>
    </location>
</feature>
<feature type="modified residue" description="Phosphoserine" evidence="17 18 19">
    <location>
        <position position="830"/>
    </location>
</feature>
<feature type="glycosylation site" description="N-linked (GlcNAc...) asparagine" evidence="9">
    <location>
        <position position="69"/>
    </location>
</feature>
<feature type="glycosylation site" description="N-linked (GlcNAc...) asparagine" evidence="3">
    <location>
        <position position="96"/>
    </location>
</feature>
<feature type="glycosylation site" description="N-linked (GlcNAc...) asparagine" evidence="3">
    <location>
        <position position="165"/>
    </location>
</feature>
<feature type="glycosylation site" description="N-linked (GlcNAc...) asparagine" evidence="9">
    <location>
        <position position="410"/>
    </location>
</feature>
<feature type="glycosylation site" description="N-linked (GlcNAc...) asparagine" evidence="3">
    <location>
        <position position="525"/>
    </location>
</feature>
<feature type="glycosylation site" description="N-linked (GlcNAc...) asparagine" evidence="3">
    <location>
        <position position="630"/>
    </location>
</feature>
<feature type="disulfide bond" evidence="4">
    <location>
        <begin position="120"/>
        <end position="131"/>
    </location>
</feature>
<feature type="disulfide bond" evidence="4">
    <location>
        <begin position="149"/>
        <end position="158"/>
    </location>
</feature>
<feature type="disulfide bond" evidence="4">
    <location>
        <begin position="286"/>
        <end position="399"/>
    </location>
</feature>
<feature type="disulfide bond" evidence="4">
    <location>
        <begin position="310"/>
        <end position="359"/>
    </location>
</feature>
<feature type="disulfide bond" evidence="4">
    <location>
        <begin position="526"/>
        <end position="543"/>
    </location>
</feature>
<feature type="disulfide bond" evidence="4">
    <location>
        <begin position="611"/>
        <end position="656"/>
    </location>
</feature>
<feature type="splice variant" id="VSP_012460" description="In isoform 2." evidence="13">
    <original>YWKEFLVMCTLFVLAVLLPVLFLLYRHRNSMKVFLKQGECASVHPKTCPVVLPPETRPLNGLGPPSTPLDHRGYQSLSDSPPGSRVFTESEKRPLSIQDSFVEVSPVCPRPRVRLGSEIRDSVV</original>
    <variation>WARTQLLDLSSLYQAVATREDSASSGEIS</variation>
    <location>
        <begin position="714"/>
        <end position="837"/>
    </location>
</feature>
<feature type="sequence variant" id="VAR_010758" description="In dbSNP:rs3751655." evidence="6 8 10 11">
    <original>S</original>
    <variation>A</variation>
    <location>
        <position position="797"/>
    </location>
</feature>
<feature type="sequence conflict" description="In Ref. 6; CAB98205." evidence="14" ref="6">
    <original>N</original>
    <variation>P</variation>
    <location>
        <position position="165"/>
    </location>
</feature>
<feature type="sequence conflict" description="In Ref. 8; AAH10701." evidence="14" ref="8">
    <original>E</original>
    <variation>K</variation>
    <location>
        <position position="570"/>
    </location>
</feature>
<comment type="function">
    <text evidence="1">Inhibits axonal extension by providing local signals to specify territories inaccessible for growing axons.</text>
</comment>
<comment type="interaction">
    <interactant intactId="EBI-25678971">
        <id>Q9NPR2</id>
    </interactant>
    <interactant intactId="EBI-25475914">
        <id>P0DTD8</id>
        <label>7b</label>
    </interactant>
    <organismsDiffer>true</organismsDiffer>
    <experiments>3</experiments>
</comment>
<comment type="subcellular location">
    <subcellularLocation>
        <location>Membrane</location>
        <topology>Single-pass type I membrane protein</topology>
    </subcellularLocation>
</comment>
<comment type="alternative products">
    <event type="alternative splicing"/>
    <isoform>
        <id>Q9NPR2-1</id>
        <name>1</name>
        <sequence type="displayed"/>
    </isoform>
    <isoform>
        <id>Q9NPR2-2</id>
        <name>2</name>
        <sequence type="described" ref="VSP_012460"/>
    </isoform>
</comment>
<comment type="similarity">
    <text evidence="14">Belongs to the semaphorin family.</text>
</comment>
<comment type="caution">
    <text evidence="14">It is uncertain whether Met-1 or Met-6 is the initiator.</text>
</comment>
<comment type="sequence caution" evidence="14">
    <conflict type="erroneous initiation">
        <sequence resource="EMBL-CDS" id="BAB15372"/>
    </conflict>
    <text>Truncated N-terminus.</text>
</comment>
<comment type="sequence caution" evidence="14">
    <conflict type="erroneous initiation">
        <sequence resource="EMBL-CDS" id="BAB21836"/>
    </conflict>
    <text>Extended N-terminus.</text>
</comment>